<geneLocation type="chloroplast"/>
<name>PSAJ_COFAR</name>
<gene>
    <name evidence="1" type="primary">psaJ</name>
</gene>
<comment type="function">
    <text evidence="1">May help in the organization of the PsaE and PsaF subunits.</text>
</comment>
<comment type="subcellular location">
    <subcellularLocation>
        <location evidence="1">Plastid</location>
        <location evidence="1">Chloroplast thylakoid membrane</location>
        <topology evidence="1">Single-pass membrane protein</topology>
    </subcellularLocation>
</comment>
<comment type="similarity">
    <text evidence="1">Belongs to the PsaJ family.</text>
</comment>
<dbReference type="EMBL" id="EF044213">
    <property type="protein sequence ID" value="ABJ89699.1"/>
    <property type="molecule type" value="Genomic_DNA"/>
</dbReference>
<dbReference type="RefSeq" id="YP_817502.1">
    <property type="nucleotide sequence ID" value="NC_008535.1"/>
</dbReference>
<dbReference type="SMR" id="A0A355"/>
<dbReference type="GeneID" id="4421785"/>
<dbReference type="OrthoDB" id="1844838at2759"/>
<dbReference type="Proteomes" id="UP000515148">
    <property type="component" value="Chloroplast Pltd"/>
</dbReference>
<dbReference type="GO" id="GO:0009535">
    <property type="term" value="C:chloroplast thylakoid membrane"/>
    <property type="evidence" value="ECO:0007669"/>
    <property type="project" value="UniProtKB-SubCell"/>
</dbReference>
<dbReference type="GO" id="GO:0009522">
    <property type="term" value="C:photosystem I"/>
    <property type="evidence" value="ECO:0007669"/>
    <property type="project" value="UniProtKB-KW"/>
</dbReference>
<dbReference type="GO" id="GO:0015979">
    <property type="term" value="P:photosynthesis"/>
    <property type="evidence" value="ECO:0007669"/>
    <property type="project" value="UniProtKB-UniRule"/>
</dbReference>
<dbReference type="FunFam" id="1.20.5.510:FF:000001">
    <property type="entry name" value="Photosystem I reaction center subunit IX"/>
    <property type="match status" value="1"/>
</dbReference>
<dbReference type="Gene3D" id="1.20.5.510">
    <property type="entry name" value="Single helix bin"/>
    <property type="match status" value="1"/>
</dbReference>
<dbReference type="HAMAP" id="MF_00522">
    <property type="entry name" value="PSI_PsaJ"/>
    <property type="match status" value="1"/>
</dbReference>
<dbReference type="InterPro" id="IPR002615">
    <property type="entry name" value="PSI_PsaJ"/>
</dbReference>
<dbReference type="InterPro" id="IPR036062">
    <property type="entry name" value="PSI_PsaJ_sf"/>
</dbReference>
<dbReference type="PANTHER" id="PTHR36082">
    <property type="match status" value="1"/>
</dbReference>
<dbReference type="PANTHER" id="PTHR36082:SF2">
    <property type="entry name" value="PHOTOSYSTEM I REACTION CENTER SUBUNIT IX"/>
    <property type="match status" value="1"/>
</dbReference>
<dbReference type="Pfam" id="PF01701">
    <property type="entry name" value="PSI_PsaJ"/>
    <property type="match status" value="1"/>
</dbReference>
<dbReference type="SUPFAM" id="SSF81544">
    <property type="entry name" value="Subunit IX of photosystem I reaction centre, PsaJ"/>
    <property type="match status" value="1"/>
</dbReference>
<organism>
    <name type="scientific">Coffea arabica</name>
    <name type="common">Arabian coffee</name>
    <dbReference type="NCBI Taxonomy" id="13443"/>
    <lineage>
        <taxon>Eukaryota</taxon>
        <taxon>Viridiplantae</taxon>
        <taxon>Streptophyta</taxon>
        <taxon>Embryophyta</taxon>
        <taxon>Tracheophyta</taxon>
        <taxon>Spermatophyta</taxon>
        <taxon>Magnoliopsida</taxon>
        <taxon>eudicotyledons</taxon>
        <taxon>Gunneridae</taxon>
        <taxon>Pentapetalae</taxon>
        <taxon>asterids</taxon>
        <taxon>lamiids</taxon>
        <taxon>Gentianales</taxon>
        <taxon>Rubiaceae</taxon>
        <taxon>Ixoroideae</taxon>
        <taxon>Gardenieae complex</taxon>
        <taxon>Bertiereae - Coffeeae clade</taxon>
        <taxon>Coffeeae</taxon>
        <taxon>Coffea</taxon>
    </lineage>
</organism>
<protein>
    <recommendedName>
        <fullName evidence="1">Photosystem I reaction center subunit IX</fullName>
    </recommendedName>
    <alternativeName>
        <fullName evidence="1">PSI-J</fullName>
    </alternativeName>
</protein>
<feature type="chain" id="PRO_0000276052" description="Photosystem I reaction center subunit IX">
    <location>
        <begin position="1"/>
        <end position="44"/>
    </location>
</feature>
<feature type="transmembrane region" description="Helical" evidence="1">
    <location>
        <begin position="7"/>
        <end position="27"/>
    </location>
</feature>
<keyword id="KW-0150">Chloroplast</keyword>
<keyword id="KW-0472">Membrane</keyword>
<keyword id="KW-0602">Photosynthesis</keyword>
<keyword id="KW-0603">Photosystem I</keyword>
<keyword id="KW-0934">Plastid</keyword>
<keyword id="KW-1185">Reference proteome</keyword>
<keyword id="KW-0793">Thylakoid</keyword>
<keyword id="KW-0812">Transmembrane</keyword>
<keyword id="KW-1133">Transmembrane helix</keyword>
<sequence>MRDFKTYLSVAPVLSTLWFGALAGLLIEINRFFPDALTFPFFSF</sequence>
<proteinExistence type="inferred from homology"/>
<reference key="1">
    <citation type="journal article" date="2007" name="Plant Biotechnol. J.">
        <title>The complete nucleotide sequence of the coffee (Coffea arabica L.) chloroplast genome: organization and implications for biotechnology and phylogenetic relationships amongst angiosperms.</title>
        <authorList>
            <person name="Samson N."/>
            <person name="Bausher M.G."/>
            <person name="Lee S.-B."/>
            <person name="Jansen R.K."/>
            <person name="Daniell H."/>
        </authorList>
    </citation>
    <scope>NUCLEOTIDE SEQUENCE [LARGE SCALE GENOMIC DNA]</scope>
</reference>
<evidence type="ECO:0000255" key="1">
    <source>
        <dbReference type="HAMAP-Rule" id="MF_00522"/>
    </source>
</evidence>
<accession>A0A355</accession>